<comment type="function">
    <text evidence="1">Cleaves peptides in various proteins in a process that requires ATP hydrolysis. Has a chymotrypsin-like activity. Plays a major role in the degradation of misfolded proteins.</text>
</comment>
<comment type="catalytic activity">
    <reaction evidence="1">
        <text>Hydrolysis of proteins to small peptides in the presence of ATP and magnesium. alpha-casein is the usual test substrate. In the absence of ATP, only oligopeptides shorter than five residues are hydrolyzed (such as succinyl-Leu-Tyr-|-NHMec, and Leu-Tyr-Leu-|-Tyr-Trp, in which cleavage of the -Tyr-|-Leu- and -Tyr-|-Trp bonds also occurs).</text>
        <dbReference type="EC" id="3.4.21.92"/>
    </reaction>
</comment>
<comment type="subunit">
    <text evidence="1">Fourteen ClpP subunits assemble into 2 heptameric rings which stack back to back to give a disk-like structure with a central cavity, resembling the structure of eukaryotic proteasomes.</text>
</comment>
<comment type="subcellular location">
    <subcellularLocation>
        <location evidence="1">Cytoplasm</location>
    </subcellularLocation>
</comment>
<comment type="similarity">
    <text evidence="1">Belongs to the peptidase S14 family.</text>
</comment>
<organism>
    <name type="scientific">Vibrio campbellii (strain ATCC BAA-1116)</name>
    <dbReference type="NCBI Taxonomy" id="2902295"/>
    <lineage>
        <taxon>Bacteria</taxon>
        <taxon>Pseudomonadati</taxon>
        <taxon>Pseudomonadota</taxon>
        <taxon>Gammaproteobacteria</taxon>
        <taxon>Vibrionales</taxon>
        <taxon>Vibrionaceae</taxon>
        <taxon>Vibrio</taxon>
    </lineage>
</organism>
<feature type="chain" id="PRO_1000124723" description="ATP-dependent Clp protease proteolytic subunit">
    <location>
        <begin position="1"/>
        <end position="208"/>
    </location>
</feature>
<feature type="active site" description="Nucleophile" evidence="1">
    <location>
        <position position="111"/>
    </location>
</feature>
<feature type="active site" evidence="1">
    <location>
        <position position="136"/>
    </location>
</feature>
<reference key="1">
    <citation type="submission" date="2007-08" db="EMBL/GenBank/DDBJ databases">
        <authorList>
            <consortium name="The Vibrio harveyi Genome Sequencing Project"/>
            <person name="Bassler B."/>
            <person name="Clifton S.W."/>
            <person name="Fulton L."/>
            <person name="Delehaunty K."/>
            <person name="Fronick C."/>
            <person name="Harrison M."/>
            <person name="Markivic C."/>
            <person name="Fulton R."/>
            <person name="Tin-Wollam A.-M."/>
            <person name="Shah N."/>
            <person name="Pepin K."/>
            <person name="Nash W."/>
            <person name="Thiruvilangam P."/>
            <person name="Bhonagiri V."/>
            <person name="Waters C."/>
            <person name="Tu K.C."/>
            <person name="Irgon J."/>
            <person name="Wilson R.K."/>
        </authorList>
    </citation>
    <scope>NUCLEOTIDE SEQUENCE [LARGE SCALE GENOMIC DNA]</scope>
    <source>
        <strain>ATCC BAA-1116 / BB120</strain>
    </source>
</reference>
<evidence type="ECO:0000255" key="1">
    <source>
        <dbReference type="HAMAP-Rule" id="MF_00444"/>
    </source>
</evidence>
<keyword id="KW-0963">Cytoplasm</keyword>
<keyword id="KW-0378">Hydrolase</keyword>
<keyword id="KW-0645">Protease</keyword>
<keyword id="KW-0720">Serine protease</keyword>
<gene>
    <name evidence="1" type="primary">clpP</name>
    <name type="ordered locus">VIBHAR_01417</name>
</gene>
<dbReference type="EC" id="3.4.21.92" evidence="1"/>
<dbReference type="EMBL" id="CP000789">
    <property type="protein sequence ID" value="ABU70392.1"/>
    <property type="molecule type" value="Genomic_DNA"/>
</dbReference>
<dbReference type="RefSeq" id="WP_005430931.1">
    <property type="nucleotide sequence ID" value="NC_009783.1"/>
</dbReference>
<dbReference type="SMR" id="A7MV87"/>
<dbReference type="MEROPS" id="S14.001"/>
<dbReference type="GeneID" id="83582469"/>
<dbReference type="KEGG" id="vha:VIBHAR_01417"/>
<dbReference type="PATRIC" id="fig|338187.36.peg.1340"/>
<dbReference type="Proteomes" id="UP000008152">
    <property type="component" value="Chromosome I"/>
</dbReference>
<dbReference type="GO" id="GO:0005737">
    <property type="term" value="C:cytoplasm"/>
    <property type="evidence" value="ECO:0007669"/>
    <property type="project" value="UniProtKB-SubCell"/>
</dbReference>
<dbReference type="GO" id="GO:0009368">
    <property type="term" value="C:endopeptidase Clp complex"/>
    <property type="evidence" value="ECO:0007669"/>
    <property type="project" value="TreeGrafter"/>
</dbReference>
<dbReference type="GO" id="GO:0004176">
    <property type="term" value="F:ATP-dependent peptidase activity"/>
    <property type="evidence" value="ECO:0007669"/>
    <property type="project" value="InterPro"/>
</dbReference>
<dbReference type="GO" id="GO:0051117">
    <property type="term" value="F:ATPase binding"/>
    <property type="evidence" value="ECO:0007669"/>
    <property type="project" value="TreeGrafter"/>
</dbReference>
<dbReference type="GO" id="GO:0004252">
    <property type="term" value="F:serine-type endopeptidase activity"/>
    <property type="evidence" value="ECO:0007669"/>
    <property type="project" value="UniProtKB-UniRule"/>
</dbReference>
<dbReference type="GO" id="GO:0006515">
    <property type="term" value="P:protein quality control for misfolded or incompletely synthesized proteins"/>
    <property type="evidence" value="ECO:0007669"/>
    <property type="project" value="TreeGrafter"/>
</dbReference>
<dbReference type="CDD" id="cd07017">
    <property type="entry name" value="S14_ClpP_2"/>
    <property type="match status" value="1"/>
</dbReference>
<dbReference type="FunFam" id="3.90.226.10:FF:000001">
    <property type="entry name" value="ATP-dependent Clp protease proteolytic subunit"/>
    <property type="match status" value="1"/>
</dbReference>
<dbReference type="Gene3D" id="3.90.226.10">
    <property type="entry name" value="2-enoyl-CoA Hydratase, Chain A, domain 1"/>
    <property type="match status" value="1"/>
</dbReference>
<dbReference type="HAMAP" id="MF_00444">
    <property type="entry name" value="ClpP"/>
    <property type="match status" value="1"/>
</dbReference>
<dbReference type="InterPro" id="IPR001907">
    <property type="entry name" value="ClpP"/>
</dbReference>
<dbReference type="InterPro" id="IPR029045">
    <property type="entry name" value="ClpP/crotonase-like_dom_sf"/>
</dbReference>
<dbReference type="InterPro" id="IPR023562">
    <property type="entry name" value="ClpP/TepA"/>
</dbReference>
<dbReference type="InterPro" id="IPR033135">
    <property type="entry name" value="ClpP_His_AS"/>
</dbReference>
<dbReference type="InterPro" id="IPR018215">
    <property type="entry name" value="ClpP_Ser_AS"/>
</dbReference>
<dbReference type="NCBIfam" id="TIGR00493">
    <property type="entry name" value="clpP"/>
    <property type="match status" value="1"/>
</dbReference>
<dbReference type="NCBIfam" id="NF001368">
    <property type="entry name" value="PRK00277.1"/>
    <property type="match status" value="1"/>
</dbReference>
<dbReference type="NCBIfam" id="NF009205">
    <property type="entry name" value="PRK12553.1"/>
    <property type="match status" value="1"/>
</dbReference>
<dbReference type="PANTHER" id="PTHR10381">
    <property type="entry name" value="ATP-DEPENDENT CLP PROTEASE PROTEOLYTIC SUBUNIT"/>
    <property type="match status" value="1"/>
</dbReference>
<dbReference type="PANTHER" id="PTHR10381:SF70">
    <property type="entry name" value="ATP-DEPENDENT CLP PROTEASE PROTEOLYTIC SUBUNIT"/>
    <property type="match status" value="1"/>
</dbReference>
<dbReference type="Pfam" id="PF00574">
    <property type="entry name" value="CLP_protease"/>
    <property type="match status" value="1"/>
</dbReference>
<dbReference type="PRINTS" id="PR00127">
    <property type="entry name" value="CLPPROTEASEP"/>
</dbReference>
<dbReference type="SUPFAM" id="SSF52096">
    <property type="entry name" value="ClpP/crotonase"/>
    <property type="match status" value="1"/>
</dbReference>
<dbReference type="PROSITE" id="PS00382">
    <property type="entry name" value="CLP_PROTEASE_HIS"/>
    <property type="match status" value="1"/>
</dbReference>
<dbReference type="PROSITE" id="PS00381">
    <property type="entry name" value="CLP_PROTEASE_SER"/>
    <property type="match status" value="1"/>
</dbReference>
<name>CLPP_VIBC1</name>
<sequence>MSYQEKNAMSPIIDALVPMVVEQTSRGERSYDIYSRLLKERVIFLTGQVEDHMANLVVAQLLFLESENPDKDIFLYINSPGGSVTAGMSIYDTMQFIKPNVSTVCMGQACSMGAFLLAGGAPGKRYVLPNSRVMIHQPLGGFQGQASDIQIHAQEILTIKQKLNNLLAEHTGQPLEVIERDTDRDNFMSADQAVEYGIVDAVLSHRGE</sequence>
<proteinExistence type="inferred from homology"/>
<protein>
    <recommendedName>
        <fullName evidence="1">ATP-dependent Clp protease proteolytic subunit</fullName>
        <ecNumber evidence="1">3.4.21.92</ecNumber>
    </recommendedName>
    <alternativeName>
        <fullName evidence="1">Endopeptidase Clp</fullName>
    </alternativeName>
</protein>
<accession>A7MV87</accession>